<dbReference type="EMBL" id="BA000034">
    <property type="protein sequence ID" value="BAC64045.1"/>
    <property type="molecule type" value="Genomic_DNA"/>
</dbReference>
<dbReference type="RefSeq" id="WP_011054460.1">
    <property type="nucleotide sequence ID" value="NC_004606.1"/>
</dbReference>
<dbReference type="SMR" id="P0DH41"/>
<dbReference type="KEGG" id="sps:SPs0950"/>
<dbReference type="HOGENOM" id="CLU_014841_3_2_9"/>
<dbReference type="GO" id="GO:0005737">
    <property type="term" value="C:cytoplasm"/>
    <property type="evidence" value="ECO:0007669"/>
    <property type="project" value="UniProtKB-SubCell"/>
</dbReference>
<dbReference type="GO" id="GO:0009380">
    <property type="term" value="C:excinuclease repair complex"/>
    <property type="evidence" value="ECO:0007669"/>
    <property type="project" value="InterPro"/>
</dbReference>
<dbReference type="GO" id="GO:0003677">
    <property type="term" value="F:DNA binding"/>
    <property type="evidence" value="ECO:0007669"/>
    <property type="project" value="UniProtKB-UniRule"/>
</dbReference>
<dbReference type="GO" id="GO:0009381">
    <property type="term" value="F:excinuclease ABC activity"/>
    <property type="evidence" value="ECO:0007669"/>
    <property type="project" value="UniProtKB-UniRule"/>
</dbReference>
<dbReference type="GO" id="GO:0006289">
    <property type="term" value="P:nucleotide-excision repair"/>
    <property type="evidence" value="ECO:0007669"/>
    <property type="project" value="UniProtKB-UniRule"/>
</dbReference>
<dbReference type="GO" id="GO:0009432">
    <property type="term" value="P:SOS response"/>
    <property type="evidence" value="ECO:0007669"/>
    <property type="project" value="UniProtKB-UniRule"/>
</dbReference>
<dbReference type="CDD" id="cd10434">
    <property type="entry name" value="GIY-YIG_UvrC_Cho"/>
    <property type="match status" value="1"/>
</dbReference>
<dbReference type="FunFam" id="3.30.420.340:FF:000002">
    <property type="entry name" value="UvrABC system protein C"/>
    <property type="match status" value="1"/>
</dbReference>
<dbReference type="FunFam" id="3.40.1440.10:FF:000001">
    <property type="entry name" value="UvrABC system protein C"/>
    <property type="match status" value="1"/>
</dbReference>
<dbReference type="Gene3D" id="1.10.150.20">
    <property type="entry name" value="5' to 3' exonuclease, C-terminal subdomain"/>
    <property type="match status" value="1"/>
</dbReference>
<dbReference type="Gene3D" id="3.40.1440.10">
    <property type="entry name" value="GIY-YIG endonuclease"/>
    <property type="match status" value="1"/>
</dbReference>
<dbReference type="Gene3D" id="4.10.860.10">
    <property type="entry name" value="UVR domain"/>
    <property type="match status" value="1"/>
</dbReference>
<dbReference type="Gene3D" id="3.30.420.340">
    <property type="entry name" value="UvrC, RNAse H endonuclease domain"/>
    <property type="match status" value="1"/>
</dbReference>
<dbReference type="HAMAP" id="MF_00203">
    <property type="entry name" value="UvrC"/>
    <property type="match status" value="1"/>
</dbReference>
<dbReference type="InterPro" id="IPR000305">
    <property type="entry name" value="GIY-YIG_endonuc"/>
</dbReference>
<dbReference type="InterPro" id="IPR035901">
    <property type="entry name" value="GIY-YIG_endonuc_sf"/>
</dbReference>
<dbReference type="InterPro" id="IPR047296">
    <property type="entry name" value="GIY-YIG_UvrC_Cho"/>
</dbReference>
<dbReference type="InterPro" id="IPR010994">
    <property type="entry name" value="RuvA_2-like"/>
</dbReference>
<dbReference type="InterPro" id="IPR001943">
    <property type="entry name" value="UVR_dom"/>
</dbReference>
<dbReference type="InterPro" id="IPR036876">
    <property type="entry name" value="UVR_dom_sf"/>
</dbReference>
<dbReference type="InterPro" id="IPR050066">
    <property type="entry name" value="UvrABC_protein_C"/>
</dbReference>
<dbReference type="InterPro" id="IPR004791">
    <property type="entry name" value="UvrC"/>
</dbReference>
<dbReference type="InterPro" id="IPR001162">
    <property type="entry name" value="UvrC_RNase_H_dom"/>
</dbReference>
<dbReference type="InterPro" id="IPR038476">
    <property type="entry name" value="UvrC_RNase_H_dom_sf"/>
</dbReference>
<dbReference type="NCBIfam" id="TIGR00194">
    <property type="entry name" value="uvrC"/>
    <property type="match status" value="1"/>
</dbReference>
<dbReference type="PANTHER" id="PTHR30562:SF1">
    <property type="entry name" value="UVRABC SYSTEM PROTEIN C"/>
    <property type="match status" value="1"/>
</dbReference>
<dbReference type="PANTHER" id="PTHR30562">
    <property type="entry name" value="UVRC/OXIDOREDUCTASE"/>
    <property type="match status" value="1"/>
</dbReference>
<dbReference type="Pfam" id="PF01541">
    <property type="entry name" value="GIY-YIG"/>
    <property type="match status" value="1"/>
</dbReference>
<dbReference type="Pfam" id="PF14520">
    <property type="entry name" value="HHH_5"/>
    <property type="match status" value="1"/>
</dbReference>
<dbReference type="Pfam" id="PF02151">
    <property type="entry name" value="UVR"/>
    <property type="match status" value="1"/>
</dbReference>
<dbReference type="Pfam" id="PF22920">
    <property type="entry name" value="UvrC_RNaseH"/>
    <property type="match status" value="1"/>
</dbReference>
<dbReference type="Pfam" id="PF08459">
    <property type="entry name" value="UvrC_RNaseH_dom"/>
    <property type="match status" value="1"/>
</dbReference>
<dbReference type="SMART" id="SM00465">
    <property type="entry name" value="GIYc"/>
    <property type="match status" value="1"/>
</dbReference>
<dbReference type="SUPFAM" id="SSF46600">
    <property type="entry name" value="C-terminal UvrC-binding domain of UvrB"/>
    <property type="match status" value="1"/>
</dbReference>
<dbReference type="SUPFAM" id="SSF82771">
    <property type="entry name" value="GIY-YIG endonuclease"/>
    <property type="match status" value="1"/>
</dbReference>
<dbReference type="SUPFAM" id="SSF47781">
    <property type="entry name" value="RuvA domain 2-like"/>
    <property type="match status" value="1"/>
</dbReference>
<dbReference type="PROSITE" id="PS50164">
    <property type="entry name" value="GIY_YIG"/>
    <property type="match status" value="1"/>
</dbReference>
<dbReference type="PROSITE" id="PS50151">
    <property type="entry name" value="UVR"/>
    <property type="match status" value="1"/>
</dbReference>
<dbReference type="PROSITE" id="PS50165">
    <property type="entry name" value="UVRC"/>
    <property type="match status" value="1"/>
</dbReference>
<sequence length="598" mass="68932">MNELIKHKLELLPDSPGCYLHKDKEGTIIYVGKAKNLKKRVRSYFRGSHDTKTELLVSEIVDFEYIVTESDTEALLLEINLIQKNMPKYNIKLKDDKSYPFLKITNESFPRLVITRYIKKNDGLYFGPYPDSYTANEVKKLLDRIFPFKKCKNPINKVCFYYHLGQCCAHTICHTDKVYWDRLIDDVKHFLNGKDDKIIEDLRSKMLAASEEMAFERAAEYRDLISGIATMRTKQRVMSKDLQDRDIFGYYVDKGWMCVQVFFVRQGKLIQRDVNLFPYYNDAEEDFLTYMGQFYQDKQHFIPKEVFIPEAIDEELVAAIVPTKIIKPKRGEKKQLVALATKNARVSLQQKFDLLEKDIKKTSGAIENLGQLLKIDKPVRIEAFDNSNIQGTSPVAAMVVFVDGKPSKKDYRKFKIKTVVGPDDYASMREVLFRRYSRVKKEGLQAPNLIIVDGGVGQVNVAKDVIEKQLGLTIPVAGLQKNDKHQTHDLLFGNPLEVVPLPRRSEEFFLLHRIQDEVHRFAVTFHRQVRRKNSFSSTLDHISGLGPKRKQLLLRHFKTITAIASATSEEIQALGIPKTVVEAIQQQITDNKNDRSSP</sequence>
<gene>
    <name evidence="1" type="primary">uvrC</name>
    <name type="ordered locus">SPs0950</name>
</gene>
<keyword id="KW-0963">Cytoplasm</keyword>
<keyword id="KW-0227">DNA damage</keyword>
<keyword id="KW-0228">DNA excision</keyword>
<keyword id="KW-0234">DNA repair</keyword>
<keyword id="KW-0267">Excision nuclease</keyword>
<keyword id="KW-0742">SOS response</keyword>
<evidence type="ECO:0000255" key="1">
    <source>
        <dbReference type="HAMAP-Rule" id="MF_00203"/>
    </source>
</evidence>
<proteinExistence type="inferred from homology"/>
<protein>
    <recommendedName>
        <fullName evidence="1">UvrABC system protein C</fullName>
        <shortName evidence="1">Protein UvrC</shortName>
    </recommendedName>
    <alternativeName>
        <fullName evidence="1">Excinuclease ABC subunit C</fullName>
    </alternativeName>
</protein>
<accession>P0DH41</accession>
<accession>Q8K7L7</accession>
<organism>
    <name type="scientific">Streptococcus pyogenes serotype M3 (strain SSI-1)</name>
    <dbReference type="NCBI Taxonomy" id="193567"/>
    <lineage>
        <taxon>Bacteria</taxon>
        <taxon>Bacillati</taxon>
        <taxon>Bacillota</taxon>
        <taxon>Bacilli</taxon>
        <taxon>Lactobacillales</taxon>
        <taxon>Streptococcaceae</taxon>
        <taxon>Streptococcus</taxon>
    </lineage>
</organism>
<name>UVRC_STRPQ</name>
<comment type="function">
    <text evidence="1">The UvrABC repair system catalyzes the recognition and processing of DNA lesions. UvrC both incises the 5' and 3' sides of the lesion. The N-terminal half is responsible for the 3' incision and the C-terminal half is responsible for the 5' incision.</text>
</comment>
<comment type="subunit">
    <text evidence="1">Interacts with UvrB in an incision complex.</text>
</comment>
<comment type="subcellular location">
    <subcellularLocation>
        <location evidence="1">Cytoplasm</location>
    </subcellularLocation>
</comment>
<comment type="similarity">
    <text evidence="1">Belongs to the UvrC family.</text>
</comment>
<reference key="1">
    <citation type="journal article" date="2003" name="Genome Res.">
        <title>Genome sequence of an M3 strain of Streptococcus pyogenes reveals a large-scale genomic rearrangement in invasive strains and new insights into phage evolution.</title>
        <authorList>
            <person name="Nakagawa I."/>
            <person name="Kurokawa K."/>
            <person name="Yamashita A."/>
            <person name="Nakata M."/>
            <person name="Tomiyasu Y."/>
            <person name="Okahashi N."/>
            <person name="Kawabata S."/>
            <person name="Yamazaki K."/>
            <person name="Shiba T."/>
            <person name="Yasunaga T."/>
            <person name="Hayashi H."/>
            <person name="Hattori M."/>
            <person name="Hamada S."/>
        </authorList>
    </citation>
    <scope>NUCLEOTIDE SEQUENCE [LARGE SCALE GENOMIC DNA]</scope>
    <source>
        <strain>SSI-1</strain>
    </source>
</reference>
<feature type="chain" id="PRO_0000411660" description="UvrABC system protein C">
    <location>
        <begin position="1"/>
        <end position="598"/>
    </location>
</feature>
<feature type="domain" description="GIY-YIG" evidence="1">
    <location>
        <begin position="14"/>
        <end position="91"/>
    </location>
</feature>
<feature type="domain" description="UVR" evidence="1">
    <location>
        <begin position="196"/>
        <end position="231"/>
    </location>
</feature>